<comment type="function">
    <text evidence="1">Cytokine that can act as a growth factor for activated T and NK cells, enhance the lytic activity of NK/lymphokine-activated killer cells, and stimulate the production of IFN-gamma by resting PBMC.</text>
</comment>
<comment type="function">
    <text evidence="1">Associates with IL23A to form the IL-23 interleukin, a heterodimeric cytokine which functions in innate and adaptive immunity. IL-23 may constitute with IL-17 an acute response to infection in peripheral tissues. IL-23 binds to a heterodimeric receptor complex composed of IL12RB1 and IL23R, activates the Jak-Stat signaling cascade, stimulates memory rather than naive T-cells and promotes production of pro-inflammatory cytokines. IL-23 induces autoimmune inflammation and thus may be responsible for autoimmune inflammatory diseases and may be important for tumorigenesis (By similarity).</text>
</comment>
<comment type="subunit">
    <text evidence="2 3">Heterodimer with IL12A; disulfide-linked. The heterodimer is known as interleukin IL-12. Heterodimer with IL23A; disulfide-linked. The heterodimer is known as interleukin IL-23. Also secreted as a monomer. Interacts with NBR1; this interaction promotes IL-12 secretion (By similarity).</text>
</comment>
<comment type="subcellular location">
    <subcellularLocation>
        <location evidence="1">Secreted</location>
    </subcellularLocation>
</comment>
<comment type="similarity">
    <text evidence="7">Belongs to the IL-12B family.</text>
</comment>
<proteinExistence type="evidence at transcript level"/>
<reference key="1">
    <citation type="submission" date="1996-04" db="EMBL/GenBank/DDBJ databases">
        <authorList>
            <person name="Laxton C.D."/>
            <person name="Foster G.R."/>
            <person name="Shanmuganathan S."/>
            <person name="Mills J.S."/>
            <person name="Ackrill A.M."/>
        </authorList>
    </citation>
    <scope>NUCLEOTIDE SEQUENCE [MRNA]</scope>
    <source>
        <tissue>Peripheral blood</tissue>
    </source>
</reference>
<dbReference type="EMBL" id="X97019">
    <property type="protein sequence ID" value="CAA65747.1"/>
    <property type="molecule type" value="mRNA"/>
</dbReference>
<dbReference type="SMR" id="Q61729"/>
<dbReference type="GlyCosmos" id="Q61729">
    <property type="glycosylation" value="2 sites, No reported glycans"/>
</dbReference>
<dbReference type="GO" id="GO:0005615">
    <property type="term" value="C:extracellular space"/>
    <property type="evidence" value="ECO:0007669"/>
    <property type="project" value="UniProtKB-KW"/>
</dbReference>
<dbReference type="GO" id="GO:0016020">
    <property type="term" value="C:membrane"/>
    <property type="evidence" value="ECO:0007669"/>
    <property type="project" value="InterPro"/>
</dbReference>
<dbReference type="GO" id="GO:0005125">
    <property type="term" value="F:cytokine activity"/>
    <property type="evidence" value="ECO:0007669"/>
    <property type="project" value="UniProtKB-KW"/>
</dbReference>
<dbReference type="GO" id="GO:0004896">
    <property type="term" value="F:cytokine receptor activity"/>
    <property type="evidence" value="ECO:0007669"/>
    <property type="project" value="InterPro"/>
</dbReference>
<dbReference type="CDD" id="cd00063">
    <property type="entry name" value="FN3"/>
    <property type="match status" value="1"/>
</dbReference>
<dbReference type="FunFam" id="2.60.40.10:FF:000959">
    <property type="entry name" value="Interleukin-12 subunit beta"/>
    <property type="match status" value="1"/>
</dbReference>
<dbReference type="FunFam" id="2.60.40.10:FF:001008">
    <property type="entry name" value="Interleukin-12 subunit beta"/>
    <property type="match status" value="1"/>
</dbReference>
<dbReference type="Gene3D" id="2.60.40.10">
    <property type="entry name" value="Immunoglobulins"/>
    <property type="match status" value="3"/>
</dbReference>
<dbReference type="InterPro" id="IPR003961">
    <property type="entry name" value="FN3_dom"/>
</dbReference>
<dbReference type="InterPro" id="IPR036116">
    <property type="entry name" value="FN3_sf"/>
</dbReference>
<dbReference type="InterPro" id="IPR003530">
    <property type="entry name" value="Hematopoietin_rcpt_L_F3_CS"/>
</dbReference>
<dbReference type="InterPro" id="IPR007110">
    <property type="entry name" value="Ig-like_dom"/>
</dbReference>
<dbReference type="InterPro" id="IPR036179">
    <property type="entry name" value="Ig-like_dom_sf"/>
</dbReference>
<dbReference type="InterPro" id="IPR013783">
    <property type="entry name" value="Ig-like_fold"/>
</dbReference>
<dbReference type="InterPro" id="IPR003598">
    <property type="entry name" value="Ig_sub2"/>
</dbReference>
<dbReference type="InterPro" id="IPR050676">
    <property type="entry name" value="IL-12"/>
</dbReference>
<dbReference type="InterPro" id="IPR015528">
    <property type="entry name" value="IL-12_beta"/>
</dbReference>
<dbReference type="InterPro" id="IPR019482">
    <property type="entry name" value="IL-12_beta_cen-dom"/>
</dbReference>
<dbReference type="PANTHER" id="PTHR48485:SF4">
    <property type="entry name" value="INTERLEUKIN-12 SUBUNIT BETA"/>
    <property type="match status" value="1"/>
</dbReference>
<dbReference type="PANTHER" id="PTHR48485">
    <property type="entry name" value="INTERLEUKIN-12 SUBUNIT BETA-RELATED"/>
    <property type="match status" value="1"/>
</dbReference>
<dbReference type="Pfam" id="PF10420">
    <property type="entry name" value="IL12p40_C"/>
    <property type="match status" value="1"/>
</dbReference>
<dbReference type="PIRSF" id="PIRSF038007">
    <property type="entry name" value="IL_12_beta"/>
    <property type="match status" value="1"/>
</dbReference>
<dbReference type="PRINTS" id="PR01928">
    <property type="entry name" value="INTRLEUKN12B"/>
</dbReference>
<dbReference type="SMART" id="SM00408">
    <property type="entry name" value="IGc2"/>
    <property type="match status" value="1"/>
</dbReference>
<dbReference type="SUPFAM" id="SSF49265">
    <property type="entry name" value="Fibronectin type III"/>
    <property type="match status" value="2"/>
</dbReference>
<dbReference type="SUPFAM" id="SSF48726">
    <property type="entry name" value="Immunoglobulin"/>
    <property type="match status" value="1"/>
</dbReference>
<dbReference type="PROSITE" id="PS50853">
    <property type="entry name" value="FN3"/>
    <property type="match status" value="1"/>
</dbReference>
<dbReference type="PROSITE" id="PS01354">
    <property type="entry name" value="HEMATOPO_REC_L_F3"/>
    <property type="match status" value="1"/>
</dbReference>
<dbReference type="PROSITE" id="PS50835">
    <property type="entry name" value="IG_LIKE"/>
    <property type="match status" value="1"/>
</dbReference>
<organism>
    <name type="scientific">Marmota monax</name>
    <name type="common">Woodchuck</name>
    <dbReference type="NCBI Taxonomy" id="9995"/>
    <lineage>
        <taxon>Eukaryota</taxon>
        <taxon>Metazoa</taxon>
        <taxon>Chordata</taxon>
        <taxon>Craniata</taxon>
        <taxon>Vertebrata</taxon>
        <taxon>Euteleostomi</taxon>
        <taxon>Mammalia</taxon>
        <taxon>Eutheria</taxon>
        <taxon>Euarchontoglires</taxon>
        <taxon>Glires</taxon>
        <taxon>Rodentia</taxon>
        <taxon>Sciuromorpha</taxon>
        <taxon>Sciuridae</taxon>
        <taxon>Xerinae</taxon>
        <taxon>Marmotini</taxon>
        <taxon>Marmota</taxon>
    </lineage>
</organism>
<keyword id="KW-0202">Cytokine</keyword>
<keyword id="KW-1015">Disulfide bond</keyword>
<keyword id="KW-0325">Glycoprotein</keyword>
<keyword id="KW-0393">Immunoglobulin domain</keyword>
<keyword id="KW-0964">Secreted</keyword>
<keyword id="KW-0732">Signal</keyword>
<evidence type="ECO:0000250" key="1"/>
<evidence type="ECO:0000250" key="2">
    <source>
        <dbReference type="UniProtKB" id="P29460"/>
    </source>
</evidence>
<evidence type="ECO:0000250" key="3">
    <source>
        <dbReference type="UniProtKB" id="P43432"/>
    </source>
</evidence>
<evidence type="ECO:0000255" key="4"/>
<evidence type="ECO:0000255" key="5">
    <source>
        <dbReference type="PROSITE-ProRule" id="PRU00114"/>
    </source>
</evidence>
<evidence type="ECO:0000255" key="6">
    <source>
        <dbReference type="PROSITE-ProRule" id="PRU00316"/>
    </source>
</evidence>
<evidence type="ECO:0000305" key="7"/>
<accession>Q61729</accession>
<feature type="signal peptide" evidence="1">
    <location>
        <begin position="1"/>
        <end position="22"/>
    </location>
</feature>
<feature type="chain" id="PRO_0000010932" description="Interleukin-12 subunit beta">
    <location>
        <begin position="23"/>
        <end position="327"/>
    </location>
</feature>
<feature type="domain" description="Ig-like C2-type">
    <location>
        <begin position="23"/>
        <end position="106"/>
    </location>
</feature>
<feature type="domain" description="Fibronectin type-III" evidence="6">
    <location>
        <begin position="237"/>
        <end position="327"/>
    </location>
</feature>
<feature type="glycosylation site" description="N-linked (GlcNAc...) asparagine" evidence="4">
    <location>
        <position position="134"/>
    </location>
</feature>
<feature type="glycosylation site" description="N-linked (GlcNAc...) asparagine" evidence="4">
    <location>
        <position position="152"/>
    </location>
</feature>
<feature type="disulfide bond" evidence="5">
    <location>
        <begin position="50"/>
        <end position="90"/>
    </location>
</feature>
<feature type="disulfide bond" description="Interchain (with C-98 in IL12A)" evidence="5">
    <location>
        <position position="199"/>
    </location>
</feature>
<sequence length="327" mass="37172">MCLQQLVISWVSLVWLASPLLAIWELEKNVYVVELDWHPDTPGEKVVLTCDTPEEDGITWTSEQSSEVLGSGKTLTILVKEFEDAGHYTCRRGGEVLSQMLLLLHKNEDGIWSTDILKKKEPENKNLVTCEAKNYSGRFTCWWLTAISTDVNFSVKSHRGSSDPQGVTCGEATLSAERVKIEQREYKKYSVQCQEDNACPTAEETLPITVVVDAVHKLKYENYISSFFIRDIIKPDPPKNLKMKPSKTPQQVEVTWEYPDSWSTPHSYFSLTFSVQVQGKKKKRSNTLHVDKTSVTVTCQKGAKVSVQARDRYYNSSWSEWATMSCP</sequence>
<protein>
    <recommendedName>
        <fullName>Interleukin-12 subunit beta</fullName>
        <shortName>IL-12B</shortName>
    </recommendedName>
    <alternativeName>
        <fullName>Cytotoxic lymphocyte maturation factor 40 kDa subunit</fullName>
        <shortName>CLMF p40</shortName>
    </alternativeName>
    <alternativeName>
        <fullName>IL-12 subunit p40</fullName>
    </alternativeName>
</protein>
<gene>
    <name type="primary">IL12B</name>
</gene>
<name>IL12B_MARMO</name>